<organism>
    <name type="scientific">Desulfotalea psychrophila (strain LSv54 / DSM 12343)</name>
    <dbReference type="NCBI Taxonomy" id="177439"/>
    <lineage>
        <taxon>Bacteria</taxon>
        <taxon>Pseudomonadati</taxon>
        <taxon>Thermodesulfobacteriota</taxon>
        <taxon>Desulfobulbia</taxon>
        <taxon>Desulfobulbales</taxon>
        <taxon>Desulfocapsaceae</taxon>
        <taxon>Desulfotalea</taxon>
    </lineage>
</organism>
<reference key="1">
    <citation type="journal article" date="2004" name="Environ. Microbiol.">
        <title>The genome of Desulfotalea psychrophila, a sulfate-reducing bacterium from permanently cold Arctic sediments.</title>
        <authorList>
            <person name="Rabus R."/>
            <person name="Ruepp A."/>
            <person name="Frickey T."/>
            <person name="Rattei T."/>
            <person name="Fartmann B."/>
            <person name="Stark M."/>
            <person name="Bauer M."/>
            <person name="Zibat A."/>
            <person name="Lombardot T."/>
            <person name="Becker I."/>
            <person name="Amann J."/>
            <person name="Gellner K."/>
            <person name="Teeling H."/>
            <person name="Leuschner W.D."/>
            <person name="Gloeckner F.-O."/>
            <person name="Lupas A.N."/>
            <person name="Amann R."/>
            <person name="Klenk H.-P."/>
        </authorList>
    </citation>
    <scope>NUCLEOTIDE SEQUENCE [LARGE SCALE GENOMIC DNA]</scope>
    <source>
        <strain>DSM 12343 / LSv54</strain>
    </source>
</reference>
<accession>Q6AJ52</accession>
<feature type="chain" id="PRO_0000109008" description="UDP-N-acetylmuramoylalanine--D-glutamate ligase">
    <location>
        <begin position="1"/>
        <end position="456"/>
    </location>
</feature>
<feature type="binding site" evidence="1">
    <location>
        <begin position="121"/>
        <end position="127"/>
    </location>
    <ligand>
        <name>ATP</name>
        <dbReference type="ChEBI" id="CHEBI:30616"/>
    </ligand>
</feature>
<dbReference type="EC" id="6.3.2.9" evidence="1"/>
<dbReference type="EMBL" id="CR522870">
    <property type="protein sequence ID" value="CAG37628.1"/>
    <property type="molecule type" value="Genomic_DNA"/>
</dbReference>
<dbReference type="RefSeq" id="WP_011190140.1">
    <property type="nucleotide sequence ID" value="NC_006138.1"/>
</dbReference>
<dbReference type="SMR" id="Q6AJ52"/>
<dbReference type="STRING" id="177439.DP2899"/>
<dbReference type="KEGG" id="dps:DP2899"/>
<dbReference type="eggNOG" id="COG0771">
    <property type="taxonomic scope" value="Bacteria"/>
</dbReference>
<dbReference type="HOGENOM" id="CLU_032540_1_0_7"/>
<dbReference type="OrthoDB" id="9809796at2"/>
<dbReference type="UniPathway" id="UPA00219"/>
<dbReference type="Proteomes" id="UP000000602">
    <property type="component" value="Chromosome"/>
</dbReference>
<dbReference type="GO" id="GO:0005737">
    <property type="term" value="C:cytoplasm"/>
    <property type="evidence" value="ECO:0007669"/>
    <property type="project" value="UniProtKB-SubCell"/>
</dbReference>
<dbReference type="GO" id="GO:0005524">
    <property type="term" value="F:ATP binding"/>
    <property type="evidence" value="ECO:0007669"/>
    <property type="project" value="UniProtKB-UniRule"/>
</dbReference>
<dbReference type="GO" id="GO:0008764">
    <property type="term" value="F:UDP-N-acetylmuramoylalanine-D-glutamate ligase activity"/>
    <property type="evidence" value="ECO:0007669"/>
    <property type="project" value="UniProtKB-UniRule"/>
</dbReference>
<dbReference type="GO" id="GO:0051301">
    <property type="term" value="P:cell division"/>
    <property type="evidence" value="ECO:0007669"/>
    <property type="project" value="UniProtKB-KW"/>
</dbReference>
<dbReference type="GO" id="GO:0071555">
    <property type="term" value="P:cell wall organization"/>
    <property type="evidence" value="ECO:0007669"/>
    <property type="project" value="UniProtKB-KW"/>
</dbReference>
<dbReference type="GO" id="GO:0009252">
    <property type="term" value="P:peptidoglycan biosynthetic process"/>
    <property type="evidence" value="ECO:0007669"/>
    <property type="project" value="UniProtKB-UniRule"/>
</dbReference>
<dbReference type="GO" id="GO:0008360">
    <property type="term" value="P:regulation of cell shape"/>
    <property type="evidence" value="ECO:0007669"/>
    <property type="project" value="UniProtKB-KW"/>
</dbReference>
<dbReference type="Gene3D" id="3.90.190.20">
    <property type="entry name" value="Mur ligase, C-terminal domain"/>
    <property type="match status" value="1"/>
</dbReference>
<dbReference type="Gene3D" id="3.40.1190.10">
    <property type="entry name" value="Mur-like, catalytic domain"/>
    <property type="match status" value="1"/>
</dbReference>
<dbReference type="Gene3D" id="3.40.50.720">
    <property type="entry name" value="NAD(P)-binding Rossmann-like Domain"/>
    <property type="match status" value="1"/>
</dbReference>
<dbReference type="HAMAP" id="MF_00639">
    <property type="entry name" value="MurD"/>
    <property type="match status" value="1"/>
</dbReference>
<dbReference type="InterPro" id="IPR036565">
    <property type="entry name" value="Mur-like_cat_sf"/>
</dbReference>
<dbReference type="InterPro" id="IPR004101">
    <property type="entry name" value="Mur_ligase_C"/>
</dbReference>
<dbReference type="InterPro" id="IPR036615">
    <property type="entry name" value="Mur_ligase_C_dom_sf"/>
</dbReference>
<dbReference type="InterPro" id="IPR013221">
    <property type="entry name" value="Mur_ligase_cen"/>
</dbReference>
<dbReference type="InterPro" id="IPR005762">
    <property type="entry name" value="MurD"/>
</dbReference>
<dbReference type="NCBIfam" id="TIGR01087">
    <property type="entry name" value="murD"/>
    <property type="match status" value="1"/>
</dbReference>
<dbReference type="PANTHER" id="PTHR43692">
    <property type="entry name" value="UDP-N-ACETYLMURAMOYLALANINE--D-GLUTAMATE LIGASE"/>
    <property type="match status" value="1"/>
</dbReference>
<dbReference type="PANTHER" id="PTHR43692:SF1">
    <property type="entry name" value="UDP-N-ACETYLMURAMOYLALANINE--D-GLUTAMATE LIGASE"/>
    <property type="match status" value="1"/>
</dbReference>
<dbReference type="Pfam" id="PF02875">
    <property type="entry name" value="Mur_ligase_C"/>
    <property type="match status" value="1"/>
</dbReference>
<dbReference type="Pfam" id="PF08245">
    <property type="entry name" value="Mur_ligase_M"/>
    <property type="match status" value="1"/>
</dbReference>
<dbReference type="Pfam" id="PF21799">
    <property type="entry name" value="MurD-like_N"/>
    <property type="match status" value="1"/>
</dbReference>
<dbReference type="SUPFAM" id="SSF51984">
    <property type="entry name" value="MurCD N-terminal domain"/>
    <property type="match status" value="1"/>
</dbReference>
<dbReference type="SUPFAM" id="SSF53623">
    <property type="entry name" value="MurD-like peptide ligases, catalytic domain"/>
    <property type="match status" value="1"/>
</dbReference>
<dbReference type="SUPFAM" id="SSF53244">
    <property type="entry name" value="MurD-like peptide ligases, peptide-binding domain"/>
    <property type="match status" value="1"/>
</dbReference>
<protein>
    <recommendedName>
        <fullName evidence="1">UDP-N-acetylmuramoylalanine--D-glutamate ligase</fullName>
        <ecNumber evidence="1">6.3.2.9</ecNumber>
    </recommendedName>
    <alternativeName>
        <fullName evidence="1">D-glutamic acid-adding enzyme</fullName>
    </alternativeName>
    <alternativeName>
        <fullName evidence="1">UDP-N-acetylmuramoyl-L-alanyl-D-glutamate synthetase</fullName>
    </alternativeName>
</protein>
<keyword id="KW-0067">ATP-binding</keyword>
<keyword id="KW-0131">Cell cycle</keyword>
<keyword id="KW-0132">Cell division</keyword>
<keyword id="KW-0133">Cell shape</keyword>
<keyword id="KW-0961">Cell wall biogenesis/degradation</keyword>
<keyword id="KW-0963">Cytoplasm</keyword>
<keyword id="KW-0436">Ligase</keyword>
<keyword id="KW-0547">Nucleotide-binding</keyword>
<keyword id="KW-0573">Peptidoglycan synthesis</keyword>
<keyword id="KW-1185">Reference proteome</keyword>
<proteinExistence type="inferred from homology"/>
<evidence type="ECO:0000255" key="1">
    <source>
        <dbReference type="HAMAP-Rule" id="MF_00639"/>
    </source>
</evidence>
<comment type="function">
    <text evidence="1">Cell wall formation. Catalyzes the addition of glutamate to the nucleotide precursor UDP-N-acetylmuramoyl-L-alanine (UMA).</text>
</comment>
<comment type="catalytic activity">
    <reaction evidence="1">
        <text>UDP-N-acetyl-alpha-D-muramoyl-L-alanine + D-glutamate + ATP = UDP-N-acetyl-alpha-D-muramoyl-L-alanyl-D-glutamate + ADP + phosphate + H(+)</text>
        <dbReference type="Rhea" id="RHEA:16429"/>
        <dbReference type="ChEBI" id="CHEBI:15378"/>
        <dbReference type="ChEBI" id="CHEBI:29986"/>
        <dbReference type="ChEBI" id="CHEBI:30616"/>
        <dbReference type="ChEBI" id="CHEBI:43474"/>
        <dbReference type="ChEBI" id="CHEBI:83898"/>
        <dbReference type="ChEBI" id="CHEBI:83900"/>
        <dbReference type="ChEBI" id="CHEBI:456216"/>
        <dbReference type="EC" id="6.3.2.9"/>
    </reaction>
</comment>
<comment type="pathway">
    <text evidence="1">Cell wall biogenesis; peptidoglycan biosynthesis.</text>
</comment>
<comment type="subcellular location">
    <subcellularLocation>
        <location evidence="1">Cytoplasm</location>
    </subcellularLocation>
</comment>
<comment type="similarity">
    <text evidence="1">Belongs to the MurCDEF family.</text>
</comment>
<name>MURD_DESPS</name>
<gene>
    <name evidence="1" type="primary">murD</name>
    <name type="ordered locus">DP2899</name>
</gene>
<sequence>MLKKNPYIDAHTTFAIIGLGVSGKAALRYALGFGAHLLVSDRRDEEALLAQLVALAGDVVVDYEAGGHTFQFLSQADVIFVSPGFADGELLARLRRAGVQVLGELALAAPVLDRPVVAITGTNGKTTVTSLVGDLLRASGKRVFVGGNIGVPLLDLLSSGDEVDVIVLEVSSFQLELAGDFSPHIALLLNLSPDHLDRHGDLAGYRAAKMHLFQKQGMTDIAIVSGDDPLCLLSDGCGEASRYLFGFSAASDISVAAGHFEFDFAGQREIYSLRDSALDNRTGWLNAAPAAFIARSLACAKADIERGIAAFTLDAHRMEPVASIAGVQYYNDSKATNTGAVISALQQLVRVILIAGGRDKGDNYRLLREAVAGHVRTLICIGEATPLLVAALEDVVQVYRATSLAEAVSLAASFAEEGDSVLLSPACASFDMFANYQDRGEQFRRQVLQLQDVGSK</sequence>